<name>TRMI_THET2</name>
<dbReference type="EC" id="2.1.1.220" evidence="2"/>
<dbReference type="EMBL" id="AJ516007">
    <property type="protein sequence ID" value="CAD56705.2"/>
    <property type="molecule type" value="Genomic_DNA"/>
</dbReference>
<dbReference type="EMBL" id="AE017221">
    <property type="protein sequence ID" value="AAS80592.1"/>
    <property type="molecule type" value="Genomic_DNA"/>
</dbReference>
<dbReference type="RefSeq" id="WP_011172697.1">
    <property type="nucleotide sequence ID" value="NC_005835.1"/>
</dbReference>
<dbReference type="PDB" id="2PWY">
    <property type="method" value="X-ray"/>
    <property type="resolution" value="1.70 A"/>
    <property type="chains" value="A/B=1-253"/>
</dbReference>
<dbReference type="PDB" id="5C0O">
    <property type="method" value="X-ray"/>
    <property type="resolution" value="2.62 A"/>
    <property type="chains" value="E/F/G/H=1-255"/>
</dbReference>
<dbReference type="PDB" id="5C1I">
    <property type="method" value="X-ray"/>
    <property type="resolution" value="3.10 A"/>
    <property type="chains" value="A/B/C/D=5-253"/>
</dbReference>
<dbReference type="PDBsum" id="2PWY"/>
<dbReference type="PDBsum" id="5C0O"/>
<dbReference type="PDBsum" id="5C1I"/>
<dbReference type="SMR" id="Q8GBB2"/>
<dbReference type="KEGG" id="tth:TT_C0244"/>
<dbReference type="eggNOG" id="COG2519">
    <property type="taxonomic scope" value="Bacteria"/>
</dbReference>
<dbReference type="HOGENOM" id="CLU_025402_0_1_0"/>
<dbReference type="OrthoDB" id="9781391at2"/>
<dbReference type="BRENDA" id="2.1.1.220">
    <property type="organism ID" value="2305"/>
</dbReference>
<dbReference type="SABIO-RK" id="Q8GBB2"/>
<dbReference type="EvolutionaryTrace" id="Q8GBB2"/>
<dbReference type="Proteomes" id="UP000000592">
    <property type="component" value="Chromosome"/>
</dbReference>
<dbReference type="GO" id="GO:0031515">
    <property type="term" value="C:tRNA (m1A) methyltransferase complex"/>
    <property type="evidence" value="ECO:0007669"/>
    <property type="project" value="InterPro"/>
</dbReference>
<dbReference type="GO" id="GO:0160107">
    <property type="term" value="F:tRNA (adenine(58)-N1)-methyltransferase activity"/>
    <property type="evidence" value="ECO:0000314"/>
    <property type="project" value="GO_Central"/>
</dbReference>
<dbReference type="GO" id="GO:0030488">
    <property type="term" value="P:tRNA methylation"/>
    <property type="evidence" value="ECO:0007669"/>
    <property type="project" value="InterPro"/>
</dbReference>
<dbReference type="GO" id="GO:0008033">
    <property type="term" value="P:tRNA processing"/>
    <property type="evidence" value="ECO:0000314"/>
    <property type="project" value="GO_Central"/>
</dbReference>
<dbReference type="CDD" id="cd02440">
    <property type="entry name" value="AdoMet_MTases"/>
    <property type="match status" value="1"/>
</dbReference>
<dbReference type="FunFam" id="3.10.330.20:FF:000003">
    <property type="entry name" value="tRNA (Adenine(58)-N(1))-methyltransferase, mitochondrial isoform X1"/>
    <property type="match status" value="1"/>
</dbReference>
<dbReference type="Gene3D" id="3.10.330.20">
    <property type="match status" value="1"/>
</dbReference>
<dbReference type="Gene3D" id="3.40.50.150">
    <property type="entry name" value="Vaccinia Virus protein VP39"/>
    <property type="match status" value="1"/>
</dbReference>
<dbReference type="InterPro" id="IPR029063">
    <property type="entry name" value="SAM-dependent_MTases_sf"/>
</dbReference>
<dbReference type="InterPro" id="IPR049470">
    <property type="entry name" value="TRM61_C"/>
</dbReference>
<dbReference type="InterPro" id="IPR014816">
    <property type="entry name" value="tRNA_MeTrfase_Gcd14"/>
</dbReference>
<dbReference type="PANTHER" id="PTHR12133">
    <property type="entry name" value="TRNA (ADENINE(58)-N(1))-METHYLTRANSFERASE"/>
    <property type="match status" value="1"/>
</dbReference>
<dbReference type="PANTHER" id="PTHR12133:SF1">
    <property type="entry name" value="TRNA (ADENINE(58)-N(1))-METHYLTRANSFERASE, MITOCHONDRIAL"/>
    <property type="match status" value="1"/>
</dbReference>
<dbReference type="Pfam" id="PF08704">
    <property type="entry name" value="GCD14"/>
    <property type="match status" value="1"/>
</dbReference>
<dbReference type="Pfam" id="PF14801">
    <property type="entry name" value="TrmI-like_N"/>
    <property type="match status" value="1"/>
</dbReference>
<dbReference type="PIRSF" id="PIRSF017269">
    <property type="entry name" value="GCD14"/>
    <property type="match status" value="1"/>
</dbReference>
<dbReference type="SUPFAM" id="SSF53335">
    <property type="entry name" value="S-adenosyl-L-methionine-dependent methyltransferases"/>
    <property type="match status" value="1"/>
</dbReference>
<dbReference type="PROSITE" id="PS51620">
    <property type="entry name" value="SAM_TRM61"/>
    <property type="match status" value="1"/>
</dbReference>
<gene>
    <name type="primary">trmI</name>
    <name type="ordered locus">TT_C0244</name>
</gene>
<proteinExistence type="evidence at protein level"/>
<protein>
    <recommendedName>
        <fullName>tRNA (adenine(58)-N(1))-methyltransferase TrmI</fullName>
        <ecNumber evidence="2">2.1.1.220</ecNumber>
    </recommendedName>
    <alternativeName>
        <fullName>tRNA(m1A58)-methyltransferase</fullName>
        <shortName>tRNA(m1A58)MTase</shortName>
    </alternativeName>
</protein>
<keyword id="KW-0002">3D-structure</keyword>
<keyword id="KW-0489">Methyltransferase</keyword>
<keyword id="KW-0949">S-adenosyl-L-methionine</keyword>
<keyword id="KW-0808">Transferase</keyword>
<keyword id="KW-0819">tRNA processing</keyword>
<comment type="function">
    <text evidence="2">Catalyzes the S-adenosyl-L-methionine-dependent formation of N(1)-methyladenine at position 58 (m1A58) in tRNA. Is required for cell growth at extreme temperatures.</text>
</comment>
<comment type="catalytic activity">
    <reaction evidence="1 2">
        <text>adenosine(58) in tRNA + S-adenosyl-L-methionine = N(1)-methyladenosine(58) in tRNA + S-adenosyl-L-homocysteine + H(+)</text>
        <dbReference type="Rhea" id="RHEA:43152"/>
        <dbReference type="Rhea" id="RHEA-COMP:10365"/>
        <dbReference type="Rhea" id="RHEA-COMP:10366"/>
        <dbReference type="ChEBI" id="CHEBI:15378"/>
        <dbReference type="ChEBI" id="CHEBI:57856"/>
        <dbReference type="ChEBI" id="CHEBI:59789"/>
        <dbReference type="ChEBI" id="CHEBI:74411"/>
        <dbReference type="ChEBI" id="CHEBI:74491"/>
        <dbReference type="EC" id="2.1.1.220"/>
    </reaction>
</comment>
<comment type="biophysicochemical properties">
    <kinetics>
        <KM evidence="3">2.1 uM for S-adenosyl-L-methionine</KM>
        <KM evidence="3">2.7 uM for tRNA(Met)</KM>
    </kinetics>
</comment>
<comment type="subunit">
    <text evidence="2 3">Homotetramer composed of a dimer of dimers.</text>
</comment>
<comment type="domain">
    <text evidence="3">Contains a large catalytic C-terminal domain that binds S-adenosyl-L-methionine and a smaller N-terminal domain that may play a role in tRNA recognition. Domains are connected by a linker region.</text>
</comment>
<comment type="similarity">
    <text evidence="1">Belongs to the class I-like SAM-binding methyltransferase superfamily. TRM61 family.</text>
</comment>
<reference evidence="4" key="1">
    <citation type="journal article" date="2003" name="Nucleic Acids Res.">
        <title>Cloning and characterization of tRNA (m1A58) methyltransferase (TrmI) from Thermus thermophilus HB27, a protein required for cell growth at extreme temperatures.</title>
        <authorList>
            <person name="Droogmans L."/>
            <person name="Roovers M."/>
            <person name="Bujnicki J.M."/>
            <person name="Tricot C."/>
            <person name="Hartsch T."/>
            <person name="Stalon V."/>
            <person name="Grosjean H."/>
        </authorList>
    </citation>
    <scope>NUCLEOTIDE SEQUENCE [GENOMIC DNA]</scope>
    <scope>FUNCTION</scope>
    <scope>CATALYTIC ACTIVITY</scope>
    <scope>SUBUNIT</scope>
    <source>
        <strain>ATCC BAA-163 / DSM 7039 / HB27</strain>
    </source>
</reference>
<reference key="2">
    <citation type="journal article" date="2004" name="Nat. Biotechnol.">
        <title>The genome sequence of the extreme thermophile Thermus thermophilus.</title>
        <authorList>
            <person name="Henne A."/>
            <person name="Brueggemann H."/>
            <person name="Raasch C."/>
            <person name="Wiezer A."/>
            <person name="Hartsch T."/>
            <person name="Liesegang H."/>
            <person name="Johann A."/>
            <person name="Lienard T."/>
            <person name="Gohl O."/>
            <person name="Martinez-Arias R."/>
            <person name="Jacobi C."/>
            <person name="Starkuviene V."/>
            <person name="Schlenczeck S."/>
            <person name="Dencker S."/>
            <person name="Huber R."/>
            <person name="Klenk H.-P."/>
            <person name="Kramer W."/>
            <person name="Merkl R."/>
            <person name="Gottschalk G."/>
            <person name="Fritz H.-J."/>
        </authorList>
    </citation>
    <scope>NUCLEOTIDE SEQUENCE [LARGE SCALE GENOMIC DNA]</scope>
    <source>
        <strain>ATCC BAA-163 / DSM 7039 / HB27</strain>
    </source>
</reference>
<reference key="3">
    <citation type="journal article" date="2008" name="J. Mol. Biol.">
        <title>Crystal structure of Thermus thermophilus tRNA m1A58 methyltransferase and biophysical characterization of its interaction with tRNA.</title>
        <authorList>
            <person name="Barraud P."/>
            <person name="Golinelli-Pimpaneau B."/>
            <person name="Atmanene C."/>
            <person name="Sanglier S."/>
            <person name="Van Dorsselaer A."/>
            <person name="Droogmans L."/>
            <person name="Dardel F."/>
            <person name="Tisne C."/>
        </authorList>
    </citation>
    <scope>X-RAY CRYSTALLOGRAPHY (1.7 ANGSTROMS) OF 1-253 IN COMPLEX WITH S-ADENOSYL-L-HOMOCYSTEINE</scope>
    <scope>BIOPHYSICOCHEMICAL PROPERTIES</scope>
    <scope>SUBUNIT</scope>
    <scope>DOMAIN</scope>
    <scope>MUTAGENESIS OF TYR-78; ASP-170 AND TYR-194</scope>
    <source>
        <strain>ATCC BAA-163 / DSM 7039 / HB27</strain>
    </source>
</reference>
<accession>Q8GBB2</accession>
<evidence type="ECO:0000255" key="1">
    <source>
        <dbReference type="PROSITE-ProRule" id="PRU00952"/>
    </source>
</evidence>
<evidence type="ECO:0000269" key="2">
    <source>
    </source>
</evidence>
<evidence type="ECO:0000269" key="3">
    <source>
    </source>
</evidence>
<evidence type="ECO:0000305" key="4"/>
<evidence type="ECO:0007829" key="5">
    <source>
        <dbReference type="PDB" id="2PWY"/>
    </source>
</evidence>
<evidence type="ECO:0007829" key="6">
    <source>
        <dbReference type="PDB" id="5C0O"/>
    </source>
</evidence>
<evidence type="ECO:0007829" key="7">
    <source>
        <dbReference type="PDB" id="5C1I"/>
    </source>
</evidence>
<sequence>MAWPGPLLLKDRKGRAYLVFPKEGGVFHHHKGSVPHEALLEAGPGGVVRTHLGEELSVHRPTLEEYLLHMKRSATPTYPKDASAMVTLLDLAPGMRVLEAGTGSGGLTLFLARAVGEKGLVESYEARPHHLAQAERNVRAFWQVENVRFHLGKLEEAELEEAAYDGVALDLMEPWKVLEKAALALKPDRFLVAYLPNITQVLELVRAAEAHPFRLERVLEVGWREWEVRLPVAHPRFQQVGHTAFLVALRRWKAS</sequence>
<organism>
    <name type="scientific">Thermus thermophilus (strain ATCC BAA-163 / DSM 7039 / HB27)</name>
    <dbReference type="NCBI Taxonomy" id="262724"/>
    <lineage>
        <taxon>Bacteria</taxon>
        <taxon>Thermotogati</taxon>
        <taxon>Deinococcota</taxon>
        <taxon>Deinococci</taxon>
        <taxon>Thermales</taxon>
        <taxon>Thermaceae</taxon>
        <taxon>Thermus</taxon>
    </lineage>
</organism>
<feature type="chain" id="PRO_0000204467" description="tRNA (adenine(58)-N(1))-methyltransferase TrmI">
    <location>
        <begin position="1"/>
        <end position="255"/>
    </location>
</feature>
<feature type="binding site">
    <location>
        <begin position="104"/>
        <end position="107"/>
    </location>
    <ligand>
        <name>S-adenosyl-L-methionine</name>
        <dbReference type="ChEBI" id="CHEBI:59789"/>
    </ligand>
</feature>
<feature type="binding site">
    <location>
        <position position="125"/>
    </location>
    <ligand>
        <name>S-adenosyl-L-methionine</name>
        <dbReference type="ChEBI" id="CHEBI:59789"/>
    </ligand>
</feature>
<feature type="binding site">
    <location>
        <position position="130"/>
    </location>
    <ligand>
        <name>S-adenosyl-L-methionine</name>
        <dbReference type="ChEBI" id="CHEBI:59789"/>
    </ligand>
</feature>
<feature type="binding site">
    <location>
        <position position="155"/>
    </location>
    <ligand>
        <name>S-adenosyl-L-methionine</name>
        <dbReference type="ChEBI" id="CHEBI:59789"/>
    </ligand>
</feature>
<feature type="binding site">
    <location>
        <position position="170"/>
    </location>
    <ligand>
        <name>S-adenosyl-L-methionine</name>
        <dbReference type="ChEBI" id="CHEBI:59789"/>
    </ligand>
</feature>
<feature type="mutagenesis site" description="20-fold decrease in catalytic efficiency. No change in Km for S-adenosyl-L-methionine." evidence="3">
    <original>Y</original>
    <variation>A</variation>
    <location>
        <position position="78"/>
    </location>
</feature>
<feature type="mutagenesis site" description="300-fold decrease in catalytic efficiency. Increase in Km for S-adenosyl-L-methionine." evidence="3">
    <original>D</original>
    <variation>A</variation>
    <location>
        <position position="170"/>
    </location>
</feature>
<feature type="mutagenesis site" description="3-fold decrease in catalytic efficiency. Increase in Km for S-adenosyl-L-methionine." evidence="3">
    <original>Y</original>
    <variation>A</variation>
    <location>
        <position position="194"/>
    </location>
</feature>
<feature type="sequence conflict" description="In Ref. 1; CAD56705." evidence="4" ref="1">
    <original>A</original>
    <variation>G</variation>
    <location>
        <position position="254"/>
    </location>
</feature>
<feature type="strand" evidence="5">
    <location>
        <begin position="7"/>
        <end position="10"/>
    </location>
</feature>
<feature type="strand" evidence="5">
    <location>
        <begin position="16"/>
        <end position="19"/>
    </location>
</feature>
<feature type="strand" evidence="7">
    <location>
        <begin position="26"/>
        <end position="31"/>
    </location>
</feature>
<feature type="strand" evidence="7">
    <location>
        <begin position="33"/>
        <end position="35"/>
    </location>
</feature>
<feature type="helix" evidence="5">
    <location>
        <begin position="36"/>
        <end position="42"/>
    </location>
</feature>
<feature type="strand" evidence="5">
    <location>
        <begin position="47"/>
        <end position="49"/>
    </location>
</feature>
<feature type="strand" evidence="5">
    <location>
        <begin position="55"/>
        <end position="59"/>
    </location>
</feature>
<feature type="helix" evidence="5">
    <location>
        <begin position="63"/>
        <end position="69"/>
    </location>
</feature>
<feature type="helix" evidence="5">
    <location>
        <begin position="79"/>
        <end position="88"/>
    </location>
</feature>
<feature type="strand" evidence="5">
    <location>
        <begin position="96"/>
        <end position="100"/>
    </location>
</feature>
<feature type="strand" evidence="7">
    <location>
        <begin position="103"/>
        <end position="105"/>
    </location>
</feature>
<feature type="helix" evidence="5">
    <location>
        <begin position="106"/>
        <end position="115"/>
    </location>
</feature>
<feature type="turn" evidence="6">
    <location>
        <begin position="116"/>
        <end position="118"/>
    </location>
</feature>
<feature type="strand" evidence="5">
    <location>
        <begin position="119"/>
        <end position="126"/>
    </location>
</feature>
<feature type="helix" evidence="5">
    <location>
        <begin position="128"/>
        <end position="141"/>
    </location>
</feature>
<feature type="strand" evidence="5">
    <location>
        <begin position="147"/>
        <end position="152"/>
    </location>
</feature>
<feature type="helix" evidence="5">
    <location>
        <begin position="154"/>
        <end position="156"/>
    </location>
</feature>
<feature type="strand" evidence="5">
    <location>
        <begin position="164"/>
        <end position="172"/>
    </location>
</feature>
<feature type="helix" evidence="5">
    <location>
        <begin position="174"/>
        <end position="177"/>
    </location>
</feature>
<feature type="helix" evidence="5">
    <location>
        <begin position="178"/>
        <end position="184"/>
    </location>
</feature>
<feature type="strand" evidence="5">
    <location>
        <begin position="185"/>
        <end position="196"/>
    </location>
</feature>
<feature type="helix" evidence="5">
    <location>
        <begin position="198"/>
        <end position="208"/>
    </location>
</feature>
<feature type="turn" evidence="5">
    <location>
        <begin position="209"/>
        <end position="212"/>
    </location>
</feature>
<feature type="strand" evidence="5">
    <location>
        <begin position="213"/>
        <end position="229"/>
    </location>
</feature>
<feature type="strand" evidence="5">
    <location>
        <begin position="232"/>
        <end position="235"/>
    </location>
</feature>
<feature type="strand" evidence="6">
    <location>
        <begin position="237"/>
        <end position="240"/>
    </location>
</feature>
<feature type="strand" evidence="5">
    <location>
        <begin position="245"/>
        <end position="251"/>
    </location>
</feature>